<dbReference type="EC" id="3.1.1.61" evidence="1"/>
<dbReference type="EC" id="3.5.1.44" evidence="1"/>
<dbReference type="EMBL" id="CP000011">
    <property type="protein sequence ID" value="AAY59282.1"/>
    <property type="molecule type" value="Genomic_DNA"/>
</dbReference>
<dbReference type="RefSeq" id="WP_004190908.1">
    <property type="nucleotide sequence ID" value="NC_006349.2"/>
</dbReference>
<dbReference type="RefSeq" id="YP_338317.1">
    <property type="nucleotide sequence ID" value="NC_006349.2"/>
</dbReference>
<dbReference type="SMR" id="Q4V2X4"/>
<dbReference type="KEGG" id="bma:BMAA0221.1"/>
<dbReference type="PATRIC" id="fig|243160.12.peg.3727"/>
<dbReference type="eggNOG" id="COG2201">
    <property type="taxonomic scope" value="Bacteria"/>
</dbReference>
<dbReference type="HOGENOM" id="CLU_000445_51_0_4"/>
<dbReference type="Proteomes" id="UP000006693">
    <property type="component" value="Chromosome 2"/>
</dbReference>
<dbReference type="GO" id="GO:0005737">
    <property type="term" value="C:cytoplasm"/>
    <property type="evidence" value="ECO:0007669"/>
    <property type="project" value="UniProtKB-SubCell"/>
</dbReference>
<dbReference type="GO" id="GO:0000156">
    <property type="term" value="F:phosphorelay response regulator activity"/>
    <property type="evidence" value="ECO:0007669"/>
    <property type="project" value="InterPro"/>
</dbReference>
<dbReference type="GO" id="GO:0008984">
    <property type="term" value="F:protein-glutamate methylesterase activity"/>
    <property type="evidence" value="ECO:0007669"/>
    <property type="project" value="UniProtKB-UniRule"/>
</dbReference>
<dbReference type="GO" id="GO:0050568">
    <property type="term" value="F:protein-glutamine glutaminase activity"/>
    <property type="evidence" value="ECO:0007669"/>
    <property type="project" value="UniProtKB-UniRule"/>
</dbReference>
<dbReference type="GO" id="GO:0006935">
    <property type="term" value="P:chemotaxis"/>
    <property type="evidence" value="ECO:0007669"/>
    <property type="project" value="UniProtKB-UniRule"/>
</dbReference>
<dbReference type="CDD" id="cd16432">
    <property type="entry name" value="CheB_Rec"/>
    <property type="match status" value="1"/>
</dbReference>
<dbReference type="CDD" id="cd17541">
    <property type="entry name" value="REC_CheB-like"/>
    <property type="match status" value="1"/>
</dbReference>
<dbReference type="Gene3D" id="3.40.50.2300">
    <property type="match status" value="1"/>
</dbReference>
<dbReference type="Gene3D" id="3.40.50.180">
    <property type="entry name" value="Methylesterase CheB, C-terminal domain"/>
    <property type="match status" value="1"/>
</dbReference>
<dbReference type="HAMAP" id="MF_00099">
    <property type="entry name" value="CheB_chemtxs"/>
    <property type="match status" value="1"/>
</dbReference>
<dbReference type="InterPro" id="IPR008248">
    <property type="entry name" value="CheB-like"/>
</dbReference>
<dbReference type="InterPro" id="IPR035909">
    <property type="entry name" value="CheB_C"/>
</dbReference>
<dbReference type="InterPro" id="IPR011006">
    <property type="entry name" value="CheY-like_superfamily"/>
</dbReference>
<dbReference type="InterPro" id="IPR000673">
    <property type="entry name" value="Sig_transdc_resp-reg_Me-estase"/>
</dbReference>
<dbReference type="InterPro" id="IPR001789">
    <property type="entry name" value="Sig_transdc_resp-reg_receiver"/>
</dbReference>
<dbReference type="NCBIfam" id="NF009206">
    <property type="entry name" value="PRK12555.1"/>
    <property type="match status" value="1"/>
</dbReference>
<dbReference type="PANTHER" id="PTHR42872">
    <property type="entry name" value="PROTEIN-GLUTAMATE METHYLESTERASE/PROTEIN-GLUTAMINE GLUTAMINASE"/>
    <property type="match status" value="1"/>
</dbReference>
<dbReference type="PANTHER" id="PTHR42872:SF6">
    <property type="entry name" value="PROTEIN-GLUTAMATE METHYLESTERASE_PROTEIN-GLUTAMINE GLUTAMINASE"/>
    <property type="match status" value="1"/>
</dbReference>
<dbReference type="Pfam" id="PF01339">
    <property type="entry name" value="CheB_methylest"/>
    <property type="match status" value="1"/>
</dbReference>
<dbReference type="Pfam" id="PF00072">
    <property type="entry name" value="Response_reg"/>
    <property type="match status" value="1"/>
</dbReference>
<dbReference type="PIRSF" id="PIRSF000876">
    <property type="entry name" value="RR_chemtxs_CheB"/>
    <property type="match status" value="1"/>
</dbReference>
<dbReference type="SMART" id="SM00448">
    <property type="entry name" value="REC"/>
    <property type="match status" value="1"/>
</dbReference>
<dbReference type="SUPFAM" id="SSF52172">
    <property type="entry name" value="CheY-like"/>
    <property type="match status" value="1"/>
</dbReference>
<dbReference type="SUPFAM" id="SSF52738">
    <property type="entry name" value="Methylesterase CheB, C-terminal domain"/>
    <property type="match status" value="1"/>
</dbReference>
<dbReference type="PROSITE" id="PS50122">
    <property type="entry name" value="CHEB"/>
    <property type="match status" value="1"/>
</dbReference>
<dbReference type="PROSITE" id="PS50110">
    <property type="entry name" value="RESPONSE_REGULATORY"/>
    <property type="match status" value="1"/>
</dbReference>
<keyword id="KW-0145">Chemotaxis</keyword>
<keyword id="KW-0963">Cytoplasm</keyword>
<keyword id="KW-0378">Hydrolase</keyword>
<keyword id="KW-0597">Phosphoprotein</keyword>
<keyword id="KW-1185">Reference proteome</keyword>
<sequence>MNIGIVNDLPLAVEALRRTIALRPEHRVLWVATDGAQALDFCVAQPPDLVLMDLVMPRIDGVSATRSIMERSPCAILIVTANVGANASYVYEAMGAGALDAVDTPTLEQGGSADPSQPLLAKIDQIGRLLATRMPLAAPAAAAPAPQGALPPLVAIGASAGGPTALTALLRRLPDDFPAALVIVQHVDQAFAIGMAQWLDGYSPLPVRIARQGSVPQAGEVLLAATNDHLHLTSRGVLAYTRRPEETPYRPSVDVFFHSVVDHWKGEAIGVLLTGMGRDGALGLKAMRTKGHYTIAQDEATSAVYGMPKAAAAIGAASAVLPLERIADQLISLVQRNRQRWR</sequence>
<gene>
    <name evidence="1" type="primary">cheB2</name>
    <name type="ordered locus">BMAA0221.1</name>
</gene>
<evidence type="ECO:0000255" key="1">
    <source>
        <dbReference type="HAMAP-Rule" id="MF_00099"/>
    </source>
</evidence>
<name>CHEB2_BURMA</name>
<organism>
    <name type="scientific">Burkholderia mallei (strain ATCC 23344)</name>
    <dbReference type="NCBI Taxonomy" id="243160"/>
    <lineage>
        <taxon>Bacteria</taxon>
        <taxon>Pseudomonadati</taxon>
        <taxon>Pseudomonadota</taxon>
        <taxon>Betaproteobacteria</taxon>
        <taxon>Burkholderiales</taxon>
        <taxon>Burkholderiaceae</taxon>
        <taxon>Burkholderia</taxon>
        <taxon>pseudomallei group</taxon>
    </lineage>
</organism>
<reference key="1">
    <citation type="journal article" date="2004" name="Proc. Natl. Acad. Sci. U.S.A.">
        <title>Structural flexibility in the Burkholderia mallei genome.</title>
        <authorList>
            <person name="Nierman W.C."/>
            <person name="DeShazer D."/>
            <person name="Kim H.S."/>
            <person name="Tettelin H."/>
            <person name="Nelson K.E."/>
            <person name="Feldblyum T.V."/>
            <person name="Ulrich R.L."/>
            <person name="Ronning C.M."/>
            <person name="Brinkac L.M."/>
            <person name="Daugherty S.C."/>
            <person name="Davidsen T.D."/>
            <person name="DeBoy R.T."/>
            <person name="Dimitrov G."/>
            <person name="Dodson R.J."/>
            <person name="Durkin A.S."/>
            <person name="Gwinn M.L."/>
            <person name="Haft D.H."/>
            <person name="Khouri H.M."/>
            <person name="Kolonay J.F."/>
            <person name="Madupu R."/>
            <person name="Mohammoud Y."/>
            <person name="Nelson W.C."/>
            <person name="Radune D."/>
            <person name="Romero C.M."/>
            <person name="Sarria S."/>
            <person name="Selengut J."/>
            <person name="Shamblin C."/>
            <person name="Sullivan S.A."/>
            <person name="White O."/>
            <person name="Yu Y."/>
            <person name="Zafar N."/>
            <person name="Zhou L."/>
            <person name="Fraser C.M."/>
        </authorList>
    </citation>
    <scope>NUCLEOTIDE SEQUENCE [LARGE SCALE GENOMIC DNA]</scope>
    <source>
        <strain>ATCC 23344</strain>
    </source>
</reference>
<accession>Q4V2X4</accession>
<feature type="chain" id="PRO_0000225444" description="Protein-glutamate methylesterase/protein-glutamine glutaminase 2">
    <location>
        <begin position="1"/>
        <end position="342"/>
    </location>
</feature>
<feature type="domain" description="Response regulatory" evidence="1">
    <location>
        <begin position="2"/>
        <end position="119"/>
    </location>
</feature>
<feature type="domain" description="CheB-type methylesterase" evidence="1">
    <location>
        <begin position="144"/>
        <end position="337"/>
    </location>
</feature>
<feature type="active site" evidence="1">
    <location>
        <position position="159"/>
    </location>
</feature>
<feature type="active site" evidence="1">
    <location>
        <position position="186"/>
    </location>
</feature>
<feature type="active site" evidence="1">
    <location>
        <position position="279"/>
    </location>
</feature>
<feature type="modified residue" description="4-aspartylphosphate" evidence="1">
    <location>
        <position position="53"/>
    </location>
</feature>
<protein>
    <recommendedName>
        <fullName evidence="1">Protein-glutamate methylesterase/protein-glutamine glutaminase 2</fullName>
        <ecNumber evidence="1">3.1.1.61</ecNumber>
        <ecNumber evidence="1">3.5.1.44</ecNumber>
    </recommendedName>
</protein>
<comment type="function">
    <text evidence="1">Involved in chemotaxis. Part of a chemotaxis signal transduction system that modulates chemotaxis in response to various stimuli. Catalyzes the demethylation of specific methylglutamate residues introduced into the chemoreceptors (methyl-accepting chemotaxis proteins or MCP) by CheR. Also mediates the irreversible deamidation of specific glutamine residues to glutamic acid.</text>
</comment>
<comment type="catalytic activity">
    <reaction evidence="1">
        <text>[protein]-L-glutamate 5-O-methyl ester + H2O = L-glutamyl-[protein] + methanol + H(+)</text>
        <dbReference type="Rhea" id="RHEA:23236"/>
        <dbReference type="Rhea" id="RHEA-COMP:10208"/>
        <dbReference type="Rhea" id="RHEA-COMP:10311"/>
        <dbReference type="ChEBI" id="CHEBI:15377"/>
        <dbReference type="ChEBI" id="CHEBI:15378"/>
        <dbReference type="ChEBI" id="CHEBI:17790"/>
        <dbReference type="ChEBI" id="CHEBI:29973"/>
        <dbReference type="ChEBI" id="CHEBI:82795"/>
        <dbReference type="EC" id="3.1.1.61"/>
    </reaction>
</comment>
<comment type="catalytic activity">
    <reaction evidence="1">
        <text>L-glutaminyl-[protein] + H2O = L-glutamyl-[protein] + NH4(+)</text>
        <dbReference type="Rhea" id="RHEA:16441"/>
        <dbReference type="Rhea" id="RHEA-COMP:10207"/>
        <dbReference type="Rhea" id="RHEA-COMP:10208"/>
        <dbReference type="ChEBI" id="CHEBI:15377"/>
        <dbReference type="ChEBI" id="CHEBI:28938"/>
        <dbReference type="ChEBI" id="CHEBI:29973"/>
        <dbReference type="ChEBI" id="CHEBI:30011"/>
        <dbReference type="EC" id="3.5.1.44"/>
    </reaction>
</comment>
<comment type="subcellular location">
    <subcellularLocation>
        <location evidence="1">Cytoplasm</location>
    </subcellularLocation>
</comment>
<comment type="domain">
    <text evidence="1">Contains a C-terminal catalytic domain, and an N-terminal region which modulates catalytic activity.</text>
</comment>
<comment type="PTM">
    <text evidence="1">Phosphorylated by CheA. Phosphorylation of the N-terminal regulatory domain activates the methylesterase activity.</text>
</comment>
<comment type="similarity">
    <text evidence="1">Belongs to the CheB family.</text>
</comment>
<proteinExistence type="inferred from homology"/>